<organism>
    <name type="scientific">Maricaulis maris (strain MCS10)</name>
    <name type="common">Caulobacter maris</name>
    <dbReference type="NCBI Taxonomy" id="394221"/>
    <lineage>
        <taxon>Bacteria</taxon>
        <taxon>Pseudomonadati</taxon>
        <taxon>Pseudomonadota</taxon>
        <taxon>Alphaproteobacteria</taxon>
        <taxon>Maricaulales</taxon>
        <taxon>Maricaulaceae</taxon>
        <taxon>Maricaulis</taxon>
    </lineage>
</organism>
<keyword id="KW-0963">Cytoplasm</keyword>
<keyword id="KW-0648">Protein biosynthesis</keyword>
<keyword id="KW-1185">Reference proteome</keyword>
<feature type="chain" id="PRO_0000341020" description="Ribosome-recycling factor">
    <location>
        <begin position="1"/>
        <end position="186"/>
    </location>
</feature>
<name>RRF_MARMM</name>
<sequence length="186" mass="20870">MSDEYDENDLKRRMDGAIESLRKEFAGLRTGRASAGLLEPIKVDAYGTPTPINQLGNISVPEPRMITLQVWDKNMVAAVDKAIRNSGIGLNPVMEGQLLRIPIPPLNEERRAEIAKLAGNYAEHARVAVRNVRRDGMDALKKMEKDGDLSEDEQKAFSEDVQKLTNEAIKRIDENLKSKQEEIMQV</sequence>
<accession>Q0APW2</accession>
<proteinExistence type="inferred from homology"/>
<dbReference type="EMBL" id="CP000449">
    <property type="protein sequence ID" value="ABI65675.1"/>
    <property type="molecule type" value="Genomic_DNA"/>
</dbReference>
<dbReference type="RefSeq" id="WP_011643322.1">
    <property type="nucleotide sequence ID" value="NC_008347.1"/>
</dbReference>
<dbReference type="SMR" id="Q0APW2"/>
<dbReference type="STRING" id="394221.Mmar10_1383"/>
<dbReference type="KEGG" id="mmr:Mmar10_1383"/>
<dbReference type="eggNOG" id="COG0233">
    <property type="taxonomic scope" value="Bacteria"/>
</dbReference>
<dbReference type="HOGENOM" id="CLU_073981_2_0_5"/>
<dbReference type="OrthoDB" id="9804006at2"/>
<dbReference type="Proteomes" id="UP000001964">
    <property type="component" value="Chromosome"/>
</dbReference>
<dbReference type="GO" id="GO:0005829">
    <property type="term" value="C:cytosol"/>
    <property type="evidence" value="ECO:0007669"/>
    <property type="project" value="GOC"/>
</dbReference>
<dbReference type="GO" id="GO:0043023">
    <property type="term" value="F:ribosomal large subunit binding"/>
    <property type="evidence" value="ECO:0007669"/>
    <property type="project" value="TreeGrafter"/>
</dbReference>
<dbReference type="GO" id="GO:0002184">
    <property type="term" value="P:cytoplasmic translational termination"/>
    <property type="evidence" value="ECO:0007669"/>
    <property type="project" value="TreeGrafter"/>
</dbReference>
<dbReference type="CDD" id="cd00520">
    <property type="entry name" value="RRF"/>
    <property type="match status" value="1"/>
</dbReference>
<dbReference type="FunFam" id="1.10.132.20:FF:000001">
    <property type="entry name" value="Ribosome-recycling factor"/>
    <property type="match status" value="1"/>
</dbReference>
<dbReference type="FunFam" id="3.30.1360.40:FF:000001">
    <property type="entry name" value="Ribosome-recycling factor"/>
    <property type="match status" value="1"/>
</dbReference>
<dbReference type="Gene3D" id="3.30.1360.40">
    <property type="match status" value="1"/>
</dbReference>
<dbReference type="Gene3D" id="1.10.132.20">
    <property type="entry name" value="Ribosome-recycling factor"/>
    <property type="match status" value="1"/>
</dbReference>
<dbReference type="HAMAP" id="MF_00040">
    <property type="entry name" value="RRF"/>
    <property type="match status" value="1"/>
</dbReference>
<dbReference type="InterPro" id="IPR002661">
    <property type="entry name" value="Ribosome_recyc_fac"/>
</dbReference>
<dbReference type="InterPro" id="IPR023584">
    <property type="entry name" value="Ribosome_recyc_fac_dom"/>
</dbReference>
<dbReference type="InterPro" id="IPR036191">
    <property type="entry name" value="RRF_sf"/>
</dbReference>
<dbReference type="NCBIfam" id="TIGR00496">
    <property type="entry name" value="frr"/>
    <property type="match status" value="1"/>
</dbReference>
<dbReference type="PANTHER" id="PTHR20982:SF3">
    <property type="entry name" value="MITOCHONDRIAL RIBOSOME RECYCLING FACTOR PSEUDO 1"/>
    <property type="match status" value="1"/>
</dbReference>
<dbReference type="PANTHER" id="PTHR20982">
    <property type="entry name" value="RIBOSOME RECYCLING FACTOR"/>
    <property type="match status" value="1"/>
</dbReference>
<dbReference type="Pfam" id="PF01765">
    <property type="entry name" value="RRF"/>
    <property type="match status" value="1"/>
</dbReference>
<dbReference type="SUPFAM" id="SSF55194">
    <property type="entry name" value="Ribosome recycling factor, RRF"/>
    <property type="match status" value="1"/>
</dbReference>
<reference key="1">
    <citation type="submission" date="2006-08" db="EMBL/GenBank/DDBJ databases">
        <title>Complete sequence of Maricaulis maris MCS10.</title>
        <authorList>
            <consortium name="US DOE Joint Genome Institute"/>
            <person name="Copeland A."/>
            <person name="Lucas S."/>
            <person name="Lapidus A."/>
            <person name="Barry K."/>
            <person name="Detter J.C."/>
            <person name="Glavina del Rio T."/>
            <person name="Hammon N."/>
            <person name="Israni S."/>
            <person name="Dalin E."/>
            <person name="Tice H."/>
            <person name="Pitluck S."/>
            <person name="Saunders E."/>
            <person name="Brettin T."/>
            <person name="Bruce D."/>
            <person name="Han C."/>
            <person name="Tapia R."/>
            <person name="Gilna P."/>
            <person name="Schmutz J."/>
            <person name="Larimer F."/>
            <person name="Land M."/>
            <person name="Hauser L."/>
            <person name="Kyrpides N."/>
            <person name="Mikhailova N."/>
            <person name="Viollier P."/>
            <person name="Stephens C."/>
            <person name="Richardson P."/>
        </authorList>
    </citation>
    <scope>NUCLEOTIDE SEQUENCE [LARGE SCALE GENOMIC DNA]</scope>
    <source>
        <strain>MCS10</strain>
    </source>
</reference>
<protein>
    <recommendedName>
        <fullName evidence="1">Ribosome-recycling factor</fullName>
        <shortName evidence="1">RRF</shortName>
    </recommendedName>
    <alternativeName>
        <fullName evidence="1">Ribosome-releasing factor</fullName>
    </alternativeName>
</protein>
<comment type="function">
    <text evidence="1">Responsible for the release of ribosomes from messenger RNA at the termination of protein biosynthesis. May increase the efficiency of translation by recycling ribosomes from one round of translation to another.</text>
</comment>
<comment type="subcellular location">
    <subcellularLocation>
        <location evidence="1">Cytoplasm</location>
    </subcellularLocation>
</comment>
<comment type="similarity">
    <text evidence="1">Belongs to the RRF family.</text>
</comment>
<evidence type="ECO:0000255" key="1">
    <source>
        <dbReference type="HAMAP-Rule" id="MF_00040"/>
    </source>
</evidence>
<gene>
    <name evidence="1" type="primary">frr</name>
    <name type="ordered locus">Mmar10_1383</name>
</gene>